<feature type="peptide" id="PRO_0000016119" description="Relaxin-like protein AGF B chain">
    <location>
        <begin position="1"/>
        <end position="54"/>
    </location>
</feature>
<feature type="peptide" id="PRO_0000016120" description="Relaxin-like protein AGF A chain">
    <location>
        <begin position="55"/>
        <end position="81"/>
    </location>
</feature>
<feature type="glycosylation site" id="CAR_000159" description="N-linked (GlcNAc...) asparagine">
    <location>
        <position position="37"/>
    </location>
</feature>
<feature type="disulfide bond" description="Interchain (between B and A chains)" evidence="1">
    <location>
        <begin position="14"/>
        <end position="66"/>
    </location>
</feature>
<feature type="disulfide bond" description="Interchain (between B and A chains)" evidence="1">
    <location>
        <begin position="26"/>
        <end position="79"/>
    </location>
</feature>
<feature type="disulfide bond" evidence="1">
    <location>
        <begin position="65"/>
        <end position="70"/>
    </location>
</feature>
<feature type="non-consecutive residues" evidence="2">
    <location>
        <begin position="54"/>
        <end position="55"/>
    </location>
</feature>
<reference key="1">
    <citation type="journal article" date="1997" name="Biochemistry">
        <title>Identification of a glycosylated relaxin-like molecule from the male Atlantic stingray, Dasyatis sabina.</title>
        <authorList>
            <person name="Buellesbach E.E."/>
            <person name="Schwabe C."/>
            <person name="Lacy E.R."/>
        </authorList>
    </citation>
    <scope>PROTEIN SEQUENCE</scope>
    <source>
        <tissue>Alkaline gland</tissue>
    </source>
</reference>
<accession>P81191</accession>
<comment type="function">
    <text>Uncertain.</text>
</comment>
<comment type="subunit">
    <text>Heterodimer of a B chain and an A chain linked by two disulfide bonds.</text>
</comment>
<comment type="subcellular location">
    <subcellularLocation>
        <location>Secreted</location>
    </subcellularLocation>
</comment>
<comment type="similarity">
    <text evidence="2">Belongs to the insulin family.</text>
</comment>
<dbReference type="GlyConnect" id="521">
    <property type="glycosylation" value="1 N-Linked glycan (1 site)"/>
</dbReference>
<dbReference type="GO" id="GO:0005576">
    <property type="term" value="C:extracellular region"/>
    <property type="evidence" value="ECO:0007669"/>
    <property type="project" value="UniProtKB-SubCell"/>
</dbReference>
<dbReference type="GO" id="GO:0005179">
    <property type="term" value="F:hormone activity"/>
    <property type="evidence" value="ECO:0007669"/>
    <property type="project" value="UniProtKB-KW"/>
</dbReference>
<dbReference type="Gene3D" id="1.10.100.10">
    <property type="entry name" value="Insulin-like"/>
    <property type="match status" value="1"/>
</dbReference>
<dbReference type="InterPro" id="IPR016179">
    <property type="entry name" value="Insulin-like"/>
</dbReference>
<dbReference type="InterPro" id="IPR036438">
    <property type="entry name" value="Insulin-like_sf"/>
</dbReference>
<dbReference type="InterPro" id="IPR022353">
    <property type="entry name" value="Insulin_CS"/>
</dbReference>
<dbReference type="Pfam" id="PF00049">
    <property type="entry name" value="Insulin"/>
    <property type="match status" value="1"/>
</dbReference>
<dbReference type="SMART" id="SM00078">
    <property type="entry name" value="IlGF"/>
    <property type="match status" value="1"/>
</dbReference>
<dbReference type="SUPFAM" id="SSF56994">
    <property type="entry name" value="Insulin-like"/>
    <property type="match status" value="1"/>
</dbReference>
<dbReference type="PROSITE" id="PS00262">
    <property type="entry name" value="INSULIN"/>
    <property type="match status" value="1"/>
</dbReference>
<name>RELX_HYPSI</name>
<protein>
    <recommendedName>
        <fullName>Relaxin-like protein AGF</fullName>
    </recommendedName>
    <component>
        <recommendedName>
            <fullName>Relaxin-like protein AGF B chain</fullName>
        </recommendedName>
    </component>
    <component>
        <recommendedName>
            <fullName>Relaxin-like protein AGF A chain</fullName>
        </recommendedName>
    </component>
</protein>
<keyword id="KW-0903">Direct protein sequencing</keyword>
<keyword id="KW-1015">Disulfide bond</keyword>
<keyword id="KW-0325">Glycoprotein</keyword>
<keyword id="KW-0372">Hormone</keyword>
<keyword id="KW-0964">Secreted</keyword>
<evidence type="ECO:0000250" key="1"/>
<evidence type="ECO:0000305" key="2"/>
<sequence length="81" mass="9198">WPRGPDYTERRVMCGLQYVRAAISICGPNMQTMRPRNGSGPIVPPPDFLAMYGMARYKPPLSKKCCSTGCNREDFRGYCYL</sequence>
<proteinExistence type="evidence at protein level"/>
<organism>
    <name type="scientific">Hypanus sabinus</name>
    <name type="common">Atlantic stingray</name>
    <name type="synonym">Dasyatis sabina</name>
    <dbReference type="NCBI Taxonomy" id="79690"/>
    <lineage>
        <taxon>Eukaryota</taxon>
        <taxon>Metazoa</taxon>
        <taxon>Chordata</taxon>
        <taxon>Craniata</taxon>
        <taxon>Vertebrata</taxon>
        <taxon>Chondrichthyes</taxon>
        <taxon>Elasmobranchii</taxon>
        <taxon>Batoidea</taxon>
        <taxon>Myliobatiformes</taxon>
        <taxon>Dasyatidae</taxon>
        <taxon>Hypanus</taxon>
    </lineage>
</organism>